<keyword id="KW-0150">Chloroplast</keyword>
<keyword id="KW-0934">Plastid</keyword>
<keyword id="KW-1185">Reference proteome</keyword>
<keyword id="KW-0687">Ribonucleoprotein</keyword>
<keyword id="KW-0689">Ribosomal protein</keyword>
<keyword id="KW-0694">RNA-binding</keyword>
<keyword id="KW-0699">rRNA-binding</keyword>
<feature type="chain" id="PRO_0000123288" description="Small ribosomal subunit protein uS11c">
    <location>
        <begin position="1"/>
        <end position="138"/>
    </location>
</feature>
<feature type="region of interest" description="Disordered" evidence="2">
    <location>
        <begin position="1"/>
        <end position="23"/>
    </location>
</feature>
<organism>
    <name type="scientific">Amborella trichopoda</name>
    <dbReference type="NCBI Taxonomy" id="13333"/>
    <lineage>
        <taxon>Eukaryota</taxon>
        <taxon>Viridiplantae</taxon>
        <taxon>Streptophyta</taxon>
        <taxon>Embryophyta</taxon>
        <taxon>Tracheophyta</taxon>
        <taxon>Spermatophyta</taxon>
        <taxon>Magnoliopsida</taxon>
        <taxon>Amborellales</taxon>
        <taxon>Amborellaceae</taxon>
        <taxon>Amborella</taxon>
    </lineage>
</organism>
<reference key="1">
    <citation type="journal article" date="2003" name="Mol. Biol. Evol.">
        <title>Analysis of the Amborella trichopoda chloroplast genome sequence suggests that Amborella is not a basal angiosperm.</title>
        <authorList>
            <person name="Goremykin V.V."/>
            <person name="Hirsch-Ernst K.I."/>
            <person name="Wolfl S."/>
            <person name="Hellwig F.H."/>
        </authorList>
    </citation>
    <scope>NUCLEOTIDE SEQUENCE [LARGE SCALE GENOMIC DNA]</scope>
</reference>
<protein>
    <recommendedName>
        <fullName evidence="1">Small ribosomal subunit protein uS11c</fullName>
    </recommendedName>
    <alternativeName>
        <fullName evidence="3">30S ribosomal protein S11, chloroplastic</fullName>
    </alternativeName>
</protein>
<comment type="subunit">
    <text evidence="1">Part of the 30S ribosomal subunit.</text>
</comment>
<comment type="subcellular location">
    <subcellularLocation>
        <location>Plastid</location>
        <location>Chloroplast</location>
    </subcellularLocation>
</comment>
<comment type="similarity">
    <text evidence="1">Belongs to the universal ribosomal protein uS11 family.</text>
</comment>
<evidence type="ECO:0000255" key="1">
    <source>
        <dbReference type="HAMAP-Rule" id="MF_01310"/>
    </source>
</evidence>
<evidence type="ECO:0000256" key="2">
    <source>
        <dbReference type="SAM" id="MobiDB-lite"/>
    </source>
</evidence>
<evidence type="ECO:0000305" key="3"/>
<dbReference type="EMBL" id="AJ506156">
    <property type="protein sequence ID" value="CAD45139.1"/>
    <property type="molecule type" value="Genomic_DNA"/>
</dbReference>
<dbReference type="RefSeq" id="NP_904131.1">
    <property type="nucleotide sequence ID" value="NC_005086.1"/>
</dbReference>
<dbReference type="SMR" id="Q70XX6"/>
<dbReference type="STRING" id="13333.Q70XX6"/>
<dbReference type="GeneID" id="2546592"/>
<dbReference type="KEGG" id="atr:2546592"/>
<dbReference type="eggNOG" id="KOG0408">
    <property type="taxonomic scope" value="Eukaryota"/>
</dbReference>
<dbReference type="OrthoDB" id="535480at2759"/>
<dbReference type="Proteomes" id="UP000017836">
    <property type="component" value="Chloroplast"/>
</dbReference>
<dbReference type="GO" id="GO:0009507">
    <property type="term" value="C:chloroplast"/>
    <property type="evidence" value="ECO:0007669"/>
    <property type="project" value="UniProtKB-SubCell"/>
</dbReference>
<dbReference type="GO" id="GO:1990904">
    <property type="term" value="C:ribonucleoprotein complex"/>
    <property type="evidence" value="ECO:0007669"/>
    <property type="project" value="UniProtKB-KW"/>
</dbReference>
<dbReference type="GO" id="GO:0005840">
    <property type="term" value="C:ribosome"/>
    <property type="evidence" value="ECO:0007669"/>
    <property type="project" value="UniProtKB-KW"/>
</dbReference>
<dbReference type="GO" id="GO:0019843">
    <property type="term" value="F:rRNA binding"/>
    <property type="evidence" value="ECO:0007669"/>
    <property type="project" value="UniProtKB-UniRule"/>
</dbReference>
<dbReference type="GO" id="GO:0003735">
    <property type="term" value="F:structural constituent of ribosome"/>
    <property type="evidence" value="ECO:0000318"/>
    <property type="project" value="GO_Central"/>
</dbReference>
<dbReference type="GO" id="GO:0006412">
    <property type="term" value="P:translation"/>
    <property type="evidence" value="ECO:0000318"/>
    <property type="project" value="GO_Central"/>
</dbReference>
<dbReference type="FunFam" id="3.30.420.80:FF:000003">
    <property type="entry name" value="30S ribosomal protein S11, chloroplastic"/>
    <property type="match status" value="1"/>
</dbReference>
<dbReference type="Gene3D" id="3.30.420.80">
    <property type="entry name" value="Ribosomal protein S11"/>
    <property type="match status" value="1"/>
</dbReference>
<dbReference type="HAMAP" id="MF_01310">
    <property type="entry name" value="Ribosomal_uS11"/>
    <property type="match status" value="1"/>
</dbReference>
<dbReference type="InterPro" id="IPR001971">
    <property type="entry name" value="Ribosomal_uS11"/>
</dbReference>
<dbReference type="InterPro" id="IPR019981">
    <property type="entry name" value="Ribosomal_uS11_bac-type"/>
</dbReference>
<dbReference type="InterPro" id="IPR018102">
    <property type="entry name" value="Ribosomal_uS11_CS"/>
</dbReference>
<dbReference type="InterPro" id="IPR036967">
    <property type="entry name" value="Ribosomal_uS11_sf"/>
</dbReference>
<dbReference type="NCBIfam" id="NF003698">
    <property type="entry name" value="PRK05309.1"/>
    <property type="match status" value="1"/>
</dbReference>
<dbReference type="NCBIfam" id="TIGR03632">
    <property type="entry name" value="uS11_bact"/>
    <property type="match status" value="1"/>
</dbReference>
<dbReference type="PANTHER" id="PTHR11759">
    <property type="entry name" value="40S RIBOSOMAL PROTEIN S14/30S RIBOSOMAL PROTEIN S11"/>
    <property type="match status" value="1"/>
</dbReference>
<dbReference type="Pfam" id="PF00411">
    <property type="entry name" value="Ribosomal_S11"/>
    <property type="match status" value="1"/>
</dbReference>
<dbReference type="PIRSF" id="PIRSF002131">
    <property type="entry name" value="Ribosomal_S11"/>
    <property type="match status" value="1"/>
</dbReference>
<dbReference type="SUPFAM" id="SSF53137">
    <property type="entry name" value="Translational machinery components"/>
    <property type="match status" value="1"/>
</dbReference>
<dbReference type="PROSITE" id="PS00054">
    <property type="entry name" value="RIBOSOMAL_S11"/>
    <property type="match status" value="1"/>
</dbReference>
<proteinExistence type="inferred from homology"/>
<gene>
    <name evidence="1" type="primary">rps11</name>
</gene>
<name>RR11_AMBTC</name>
<geneLocation type="chloroplast"/>
<accession>Q70XX6</accession>
<sequence length="138" mass="15070">MKKPIPRIGSRRNGRIGSRKNGRRIPKGVIHVQASFNNTIVTVTDVRGRVVSWCSAGTCGFRGTRRGTPFAAQTAATNAIRTVVDQGMQRAEVMIKGPGLGRDAALRAIRRSGVLLSFVRDVTPMPHNGCRPPKKRRV</sequence>